<name>NUOB_METFK</name>
<gene>
    <name evidence="2" type="primary">nuoB</name>
    <name type="ordered locus">Mfla_2060</name>
</gene>
<dbReference type="EC" id="7.1.1.-" evidence="2"/>
<dbReference type="EMBL" id="CP000284">
    <property type="protein sequence ID" value="ABE50327.1"/>
    <property type="molecule type" value="Genomic_DNA"/>
</dbReference>
<dbReference type="RefSeq" id="WP_011480281.1">
    <property type="nucleotide sequence ID" value="NC_007947.1"/>
</dbReference>
<dbReference type="SMR" id="Q1GZL0"/>
<dbReference type="STRING" id="265072.Mfla_2060"/>
<dbReference type="KEGG" id="mfa:Mfla_2060"/>
<dbReference type="eggNOG" id="COG0377">
    <property type="taxonomic scope" value="Bacteria"/>
</dbReference>
<dbReference type="HOGENOM" id="CLU_055737_7_3_4"/>
<dbReference type="OrthoDB" id="9786737at2"/>
<dbReference type="Proteomes" id="UP000002440">
    <property type="component" value="Chromosome"/>
</dbReference>
<dbReference type="GO" id="GO:0005886">
    <property type="term" value="C:plasma membrane"/>
    <property type="evidence" value="ECO:0007669"/>
    <property type="project" value="UniProtKB-SubCell"/>
</dbReference>
<dbReference type="GO" id="GO:0045271">
    <property type="term" value="C:respiratory chain complex I"/>
    <property type="evidence" value="ECO:0007669"/>
    <property type="project" value="TreeGrafter"/>
</dbReference>
<dbReference type="GO" id="GO:0051539">
    <property type="term" value="F:4 iron, 4 sulfur cluster binding"/>
    <property type="evidence" value="ECO:0007669"/>
    <property type="project" value="UniProtKB-KW"/>
</dbReference>
<dbReference type="GO" id="GO:0005506">
    <property type="term" value="F:iron ion binding"/>
    <property type="evidence" value="ECO:0007669"/>
    <property type="project" value="UniProtKB-UniRule"/>
</dbReference>
<dbReference type="GO" id="GO:0008137">
    <property type="term" value="F:NADH dehydrogenase (ubiquinone) activity"/>
    <property type="evidence" value="ECO:0007669"/>
    <property type="project" value="InterPro"/>
</dbReference>
<dbReference type="GO" id="GO:0050136">
    <property type="term" value="F:NADH:ubiquinone reductase (non-electrogenic) activity"/>
    <property type="evidence" value="ECO:0007669"/>
    <property type="project" value="UniProtKB-UniRule"/>
</dbReference>
<dbReference type="GO" id="GO:0048038">
    <property type="term" value="F:quinone binding"/>
    <property type="evidence" value="ECO:0007669"/>
    <property type="project" value="UniProtKB-KW"/>
</dbReference>
<dbReference type="GO" id="GO:0009060">
    <property type="term" value="P:aerobic respiration"/>
    <property type="evidence" value="ECO:0007669"/>
    <property type="project" value="TreeGrafter"/>
</dbReference>
<dbReference type="GO" id="GO:0015990">
    <property type="term" value="P:electron transport coupled proton transport"/>
    <property type="evidence" value="ECO:0007669"/>
    <property type="project" value="TreeGrafter"/>
</dbReference>
<dbReference type="FunFam" id="3.40.50.12280:FF:000001">
    <property type="entry name" value="NADH-quinone oxidoreductase subunit B 2"/>
    <property type="match status" value="1"/>
</dbReference>
<dbReference type="Gene3D" id="3.40.50.12280">
    <property type="match status" value="1"/>
</dbReference>
<dbReference type="HAMAP" id="MF_01356">
    <property type="entry name" value="NDH1_NuoB"/>
    <property type="match status" value="1"/>
</dbReference>
<dbReference type="InterPro" id="IPR006137">
    <property type="entry name" value="NADH_UbQ_OxRdtase-like_20kDa"/>
</dbReference>
<dbReference type="InterPro" id="IPR006138">
    <property type="entry name" value="NADH_UQ_OxRdtase_20Kd_su"/>
</dbReference>
<dbReference type="NCBIfam" id="TIGR01957">
    <property type="entry name" value="nuoB_fam"/>
    <property type="match status" value="1"/>
</dbReference>
<dbReference type="NCBIfam" id="NF005012">
    <property type="entry name" value="PRK06411.1"/>
    <property type="match status" value="1"/>
</dbReference>
<dbReference type="PANTHER" id="PTHR11995">
    <property type="entry name" value="NADH DEHYDROGENASE"/>
    <property type="match status" value="1"/>
</dbReference>
<dbReference type="PANTHER" id="PTHR11995:SF14">
    <property type="entry name" value="NADH DEHYDROGENASE [UBIQUINONE] IRON-SULFUR PROTEIN 7, MITOCHONDRIAL"/>
    <property type="match status" value="1"/>
</dbReference>
<dbReference type="Pfam" id="PF01058">
    <property type="entry name" value="Oxidored_q6"/>
    <property type="match status" value="1"/>
</dbReference>
<dbReference type="SUPFAM" id="SSF56770">
    <property type="entry name" value="HydA/Nqo6-like"/>
    <property type="match status" value="1"/>
</dbReference>
<dbReference type="PROSITE" id="PS01150">
    <property type="entry name" value="COMPLEX1_20K"/>
    <property type="match status" value="1"/>
</dbReference>
<keyword id="KW-0004">4Fe-4S</keyword>
<keyword id="KW-0997">Cell inner membrane</keyword>
<keyword id="KW-1003">Cell membrane</keyword>
<keyword id="KW-0408">Iron</keyword>
<keyword id="KW-0411">Iron-sulfur</keyword>
<keyword id="KW-0472">Membrane</keyword>
<keyword id="KW-0479">Metal-binding</keyword>
<keyword id="KW-0520">NAD</keyword>
<keyword id="KW-0874">Quinone</keyword>
<keyword id="KW-1185">Reference proteome</keyword>
<keyword id="KW-1278">Translocase</keyword>
<keyword id="KW-0813">Transport</keyword>
<keyword id="KW-0830">Ubiquinone</keyword>
<accession>Q1GZL0</accession>
<sequence>MSIEGVLEKGFVTTTLDTVINYTRTGSLWPMTFGLACCAVEMMHAGAARYDLDRFGIVFRPSPRQSDVMIVAGTLVNKMAPALRKVYDQMAEPRWVISMGSCANGGGYYHYSYAVVRGCDRIVPVDVYVPGCPPTAEALLYGIIQLQNKIKRTNTIAR</sequence>
<evidence type="ECO:0000250" key="1"/>
<evidence type="ECO:0000255" key="2">
    <source>
        <dbReference type="HAMAP-Rule" id="MF_01356"/>
    </source>
</evidence>
<comment type="function">
    <text evidence="1">NDH-1 shuttles electrons from NADH, via FMN and iron-sulfur (Fe-S) centers, to quinones in the respiratory chain. Couples the redox reaction to proton translocation (for every two electrons transferred, four hydrogen ions are translocated across the cytoplasmic membrane), and thus conserves the redox energy in a proton gradient (By similarity).</text>
</comment>
<comment type="catalytic activity">
    <reaction evidence="2">
        <text>a quinone + NADH + 5 H(+)(in) = a quinol + NAD(+) + 4 H(+)(out)</text>
        <dbReference type="Rhea" id="RHEA:57888"/>
        <dbReference type="ChEBI" id="CHEBI:15378"/>
        <dbReference type="ChEBI" id="CHEBI:24646"/>
        <dbReference type="ChEBI" id="CHEBI:57540"/>
        <dbReference type="ChEBI" id="CHEBI:57945"/>
        <dbReference type="ChEBI" id="CHEBI:132124"/>
    </reaction>
</comment>
<comment type="cofactor">
    <cofactor evidence="2">
        <name>[4Fe-4S] cluster</name>
        <dbReference type="ChEBI" id="CHEBI:49883"/>
    </cofactor>
    <text evidence="2">Binds 1 [4Fe-4S] cluster.</text>
</comment>
<comment type="subunit">
    <text evidence="2">NDH-1 is composed of 14 different subunits. Subunits NuoB, C, D, E, F, and G constitute the peripheral sector of the complex.</text>
</comment>
<comment type="subcellular location">
    <subcellularLocation>
        <location evidence="2">Cell inner membrane</location>
        <topology evidence="2">Peripheral membrane protein</topology>
        <orientation evidence="2">Cytoplasmic side</orientation>
    </subcellularLocation>
</comment>
<comment type="similarity">
    <text evidence="2">Belongs to the complex I 20 kDa subunit family.</text>
</comment>
<feature type="chain" id="PRO_0000358425" description="NADH-quinone oxidoreductase subunit B">
    <location>
        <begin position="1"/>
        <end position="158"/>
    </location>
</feature>
<feature type="binding site" evidence="2">
    <location>
        <position position="37"/>
    </location>
    <ligand>
        <name>[4Fe-4S] cluster</name>
        <dbReference type="ChEBI" id="CHEBI:49883"/>
    </ligand>
</feature>
<feature type="binding site" evidence="2">
    <location>
        <position position="38"/>
    </location>
    <ligand>
        <name>[4Fe-4S] cluster</name>
        <dbReference type="ChEBI" id="CHEBI:49883"/>
    </ligand>
</feature>
<feature type="binding site" evidence="2">
    <location>
        <position position="102"/>
    </location>
    <ligand>
        <name>[4Fe-4S] cluster</name>
        <dbReference type="ChEBI" id="CHEBI:49883"/>
    </ligand>
</feature>
<feature type="binding site" evidence="2">
    <location>
        <position position="132"/>
    </location>
    <ligand>
        <name>[4Fe-4S] cluster</name>
        <dbReference type="ChEBI" id="CHEBI:49883"/>
    </ligand>
</feature>
<protein>
    <recommendedName>
        <fullName evidence="2">NADH-quinone oxidoreductase subunit B</fullName>
        <ecNumber evidence="2">7.1.1.-</ecNumber>
    </recommendedName>
    <alternativeName>
        <fullName evidence="2">NADH dehydrogenase I subunit B</fullName>
    </alternativeName>
    <alternativeName>
        <fullName evidence="2">NDH-1 subunit B</fullName>
    </alternativeName>
</protein>
<proteinExistence type="inferred from homology"/>
<reference key="1">
    <citation type="submission" date="2006-03" db="EMBL/GenBank/DDBJ databases">
        <title>Complete sequence of Methylobacillus flagellatus KT.</title>
        <authorList>
            <consortium name="US DOE Joint Genome Institute"/>
            <person name="Copeland A."/>
            <person name="Lucas S."/>
            <person name="Lapidus A."/>
            <person name="Barry K."/>
            <person name="Detter J.C."/>
            <person name="Glavina del Rio T."/>
            <person name="Hammon N."/>
            <person name="Israni S."/>
            <person name="Dalin E."/>
            <person name="Tice H."/>
            <person name="Pitluck S."/>
            <person name="Brettin T."/>
            <person name="Bruce D."/>
            <person name="Han C."/>
            <person name="Tapia R."/>
            <person name="Saunders E."/>
            <person name="Gilna P."/>
            <person name="Schmutz J."/>
            <person name="Larimer F."/>
            <person name="Land M."/>
            <person name="Kyrpides N."/>
            <person name="Anderson I."/>
            <person name="Richardson P."/>
        </authorList>
    </citation>
    <scope>NUCLEOTIDE SEQUENCE [LARGE SCALE GENOMIC DNA]</scope>
    <source>
        <strain>ATCC 51484 / DSM 6875 / VKM B-1610 / KT</strain>
    </source>
</reference>
<organism>
    <name type="scientific">Methylobacillus flagellatus (strain ATCC 51484 / DSM 6875 / VKM B-1610 / KT)</name>
    <dbReference type="NCBI Taxonomy" id="265072"/>
    <lineage>
        <taxon>Bacteria</taxon>
        <taxon>Pseudomonadati</taxon>
        <taxon>Pseudomonadota</taxon>
        <taxon>Betaproteobacteria</taxon>
        <taxon>Nitrosomonadales</taxon>
        <taxon>Methylophilaceae</taxon>
        <taxon>Methylobacillus</taxon>
    </lineage>
</organism>